<name>COBT_NOVAD</name>
<keyword id="KW-0169">Cobalamin biosynthesis</keyword>
<keyword id="KW-0328">Glycosyltransferase</keyword>
<keyword id="KW-1185">Reference proteome</keyword>
<keyword id="KW-0808">Transferase</keyword>
<dbReference type="EC" id="2.4.2.21" evidence="1"/>
<dbReference type="EMBL" id="CP000248">
    <property type="protein sequence ID" value="ABD24776.1"/>
    <property type="molecule type" value="Genomic_DNA"/>
</dbReference>
<dbReference type="RefSeq" id="WP_011443990.1">
    <property type="nucleotide sequence ID" value="NC_007794.1"/>
</dbReference>
<dbReference type="SMR" id="Q2GBJ7"/>
<dbReference type="STRING" id="279238.Saro_0328"/>
<dbReference type="KEGG" id="nar:Saro_0328"/>
<dbReference type="eggNOG" id="COG2038">
    <property type="taxonomic scope" value="Bacteria"/>
</dbReference>
<dbReference type="HOGENOM" id="CLU_002982_0_1_5"/>
<dbReference type="UniPathway" id="UPA00061">
    <property type="reaction ID" value="UER00516"/>
</dbReference>
<dbReference type="Proteomes" id="UP000009134">
    <property type="component" value="Chromosome"/>
</dbReference>
<dbReference type="GO" id="GO:0008939">
    <property type="term" value="F:nicotinate-nucleotide-dimethylbenzimidazole phosphoribosyltransferase activity"/>
    <property type="evidence" value="ECO:0007669"/>
    <property type="project" value="UniProtKB-UniRule"/>
</dbReference>
<dbReference type="GO" id="GO:0009236">
    <property type="term" value="P:cobalamin biosynthetic process"/>
    <property type="evidence" value="ECO:0007669"/>
    <property type="project" value="UniProtKB-KW"/>
</dbReference>
<dbReference type="CDD" id="cd02439">
    <property type="entry name" value="DMB-PRT_CobT"/>
    <property type="match status" value="1"/>
</dbReference>
<dbReference type="Gene3D" id="1.10.1610.10">
    <property type="match status" value="1"/>
</dbReference>
<dbReference type="Gene3D" id="3.40.50.10210">
    <property type="match status" value="1"/>
</dbReference>
<dbReference type="HAMAP" id="MF_00230">
    <property type="entry name" value="CobT"/>
    <property type="match status" value="1"/>
</dbReference>
<dbReference type="InterPro" id="IPR003200">
    <property type="entry name" value="Nict_dMeBzImd_PRibTrfase"/>
</dbReference>
<dbReference type="InterPro" id="IPR017846">
    <property type="entry name" value="Nict_dMeBzImd_PRibTrfase_bact"/>
</dbReference>
<dbReference type="InterPro" id="IPR023195">
    <property type="entry name" value="Nict_dMeBzImd_PRibTrfase_N"/>
</dbReference>
<dbReference type="InterPro" id="IPR036087">
    <property type="entry name" value="Nict_dMeBzImd_PRibTrfase_sf"/>
</dbReference>
<dbReference type="NCBIfam" id="TIGR03160">
    <property type="entry name" value="cobT_DBIPRT"/>
    <property type="match status" value="1"/>
</dbReference>
<dbReference type="NCBIfam" id="NF000996">
    <property type="entry name" value="PRK00105.1"/>
    <property type="match status" value="1"/>
</dbReference>
<dbReference type="PANTHER" id="PTHR43463">
    <property type="entry name" value="NICOTINATE-NUCLEOTIDE--DIMETHYLBENZIMIDAZOLE PHOSPHORIBOSYLTRANSFERASE"/>
    <property type="match status" value="1"/>
</dbReference>
<dbReference type="PANTHER" id="PTHR43463:SF1">
    <property type="entry name" value="NICOTINATE-NUCLEOTIDE--DIMETHYLBENZIMIDAZOLE PHOSPHORIBOSYLTRANSFERASE"/>
    <property type="match status" value="1"/>
</dbReference>
<dbReference type="Pfam" id="PF02277">
    <property type="entry name" value="DBI_PRT"/>
    <property type="match status" value="1"/>
</dbReference>
<dbReference type="SUPFAM" id="SSF52733">
    <property type="entry name" value="Nicotinate mononucleotide:5,6-dimethylbenzimidazole phosphoribosyltransferase (CobT)"/>
    <property type="match status" value="1"/>
</dbReference>
<comment type="function">
    <text evidence="1">Catalyzes the synthesis of alpha-ribazole-5'-phosphate from nicotinate mononucleotide (NAMN) and 5,6-dimethylbenzimidazole (DMB).</text>
</comment>
<comment type="catalytic activity">
    <reaction evidence="1">
        <text>5,6-dimethylbenzimidazole + nicotinate beta-D-ribonucleotide = alpha-ribazole 5'-phosphate + nicotinate + H(+)</text>
        <dbReference type="Rhea" id="RHEA:11196"/>
        <dbReference type="ChEBI" id="CHEBI:15378"/>
        <dbReference type="ChEBI" id="CHEBI:15890"/>
        <dbReference type="ChEBI" id="CHEBI:32544"/>
        <dbReference type="ChEBI" id="CHEBI:57502"/>
        <dbReference type="ChEBI" id="CHEBI:57918"/>
        <dbReference type="EC" id="2.4.2.21"/>
    </reaction>
</comment>
<comment type="pathway">
    <text evidence="1">Nucleoside biosynthesis; alpha-ribazole biosynthesis; alpha-ribazole from 5,6-dimethylbenzimidazole: step 1/2.</text>
</comment>
<comment type="similarity">
    <text evidence="1">Belongs to the CobT family.</text>
</comment>
<sequence>MSRFASLAAFEAALERLPVADADAITAARARQASLTKPAGSLGRLEDIAVFMAGWQGTAQPVIEQGRAAIFAGNHGFVVHGVSAFPASVTAAMVGNFAAGGAAINALAGAAGLDLRVIALDLDRPTADFTIAAAMDETECLAALAAGAAVVEPGLHLLVVGEMGIGNSTAAAALCARSYGGSPAQWAGPGTGVDAGGIARKVAVVERALAFHADAPDTPFEILRRLGGREIAGVAGAVLEARRLRIPVVLDGFISCAALAPLAAAVPAITDHCLAGHCSAEPGHIRLLEHLGLDPLLSLGMRLGEGSGAALAVSVIRAALATHNGMATFAQAGVADGL</sequence>
<protein>
    <recommendedName>
        <fullName evidence="1">Nicotinate-nucleotide--dimethylbenzimidazole phosphoribosyltransferase</fullName>
        <shortName evidence="1">NN:DBI PRT</shortName>
        <ecNumber evidence="1">2.4.2.21</ecNumber>
    </recommendedName>
    <alternativeName>
        <fullName evidence="1">N(1)-alpha-phosphoribosyltransferase</fullName>
    </alternativeName>
</protein>
<accession>Q2GBJ7</accession>
<gene>
    <name evidence="1" type="primary">cobT</name>
    <name type="ordered locus">Saro_0328</name>
</gene>
<proteinExistence type="inferred from homology"/>
<reference key="1">
    <citation type="submission" date="2006-01" db="EMBL/GenBank/DDBJ databases">
        <title>Complete sequence of Novosphingobium aromaticivorans DSM 12444.</title>
        <authorList>
            <consortium name="US DOE Joint Genome Institute"/>
            <person name="Copeland A."/>
            <person name="Lucas S."/>
            <person name="Lapidus A."/>
            <person name="Barry K."/>
            <person name="Detter J.C."/>
            <person name="Glavina T."/>
            <person name="Hammon N."/>
            <person name="Israni S."/>
            <person name="Pitluck S."/>
            <person name="Chain P."/>
            <person name="Malfatti S."/>
            <person name="Shin M."/>
            <person name="Vergez L."/>
            <person name="Schmutz J."/>
            <person name="Larimer F."/>
            <person name="Land M."/>
            <person name="Kyrpides N."/>
            <person name="Ivanova N."/>
            <person name="Fredrickson J."/>
            <person name="Balkwill D."/>
            <person name="Romine M.F."/>
            <person name="Richardson P."/>
        </authorList>
    </citation>
    <scope>NUCLEOTIDE SEQUENCE [LARGE SCALE GENOMIC DNA]</scope>
    <source>
        <strain>ATCC 700278 / DSM 12444 / CCUG 56034 / CIP 105152 / NBRC 16084 / F199</strain>
    </source>
</reference>
<organism>
    <name type="scientific">Novosphingobium aromaticivorans (strain ATCC 700278 / DSM 12444 / CCUG 56034 / CIP 105152 / NBRC 16084 / F199)</name>
    <dbReference type="NCBI Taxonomy" id="279238"/>
    <lineage>
        <taxon>Bacteria</taxon>
        <taxon>Pseudomonadati</taxon>
        <taxon>Pseudomonadota</taxon>
        <taxon>Alphaproteobacteria</taxon>
        <taxon>Sphingomonadales</taxon>
        <taxon>Sphingomonadaceae</taxon>
        <taxon>Novosphingobium</taxon>
    </lineage>
</organism>
<feature type="chain" id="PRO_1000021606" description="Nicotinate-nucleotide--dimethylbenzimidazole phosphoribosyltransferase">
    <location>
        <begin position="1"/>
        <end position="338"/>
    </location>
</feature>
<feature type="active site" description="Proton acceptor" evidence="1">
    <location>
        <position position="305"/>
    </location>
</feature>
<evidence type="ECO:0000255" key="1">
    <source>
        <dbReference type="HAMAP-Rule" id="MF_00230"/>
    </source>
</evidence>